<gene>
    <name type="ordered locus">HI_1176</name>
</gene>
<dbReference type="EMBL" id="L42023">
    <property type="protein sequence ID" value="AAC22835.1"/>
    <property type="molecule type" value="Genomic_DNA"/>
</dbReference>
<dbReference type="PIR" id="C64021">
    <property type="entry name" value="C64021"/>
</dbReference>
<dbReference type="SMR" id="P44120"/>
<dbReference type="STRING" id="71421.HI_1176"/>
<dbReference type="EnsemblBacteria" id="AAC22835">
    <property type="protein sequence ID" value="AAC22835"/>
    <property type="gene ID" value="HI_1176"/>
</dbReference>
<dbReference type="KEGG" id="hin:HI_1176"/>
<dbReference type="HOGENOM" id="CLU_2699554_0_0_6"/>
<dbReference type="Proteomes" id="UP000000579">
    <property type="component" value="Chromosome"/>
</dbReference>
<dbReference type="Gene3D" id="2.150.10.10">
    <property type="entry name" value="Serralysin-like metalloprotease, C-terminal"/>
    <property type="match status" value="1"/>
</dbReference>
<dbReference type="InterPro" id="IPR011049">
    <property type="entry name" value="Serralysin-like_metalloprot_C"/>
</dbReference>
<reference key="1">
    <citation type="journal article" date="1995" name="Science">
        <title>Whole-genome random sequencing and assembly of Haemophilus influenzae Rd.</title>
        <authorList>
            <person name="Fleischmann R.D."/>
            <person name="Adams M.D."/>
            <person name="White O."/>
            <person name="Clayton R.A."/>
            <person name="Kirkness E.F."/>
            <person name="Kerlavage A.R."/>
            <person name="Bult C.J."/>
            <person name="Tomb J.-F."/>
            <person name="Dougherty B.A."/>
            <person name="Merrick J.M."/>
            <person name="McKenney K."/>
            <person name="Sutton G.G."/>
            <person name="FitzHugh W."/>
            <person name="Fields C.A."/>
            <person name="Gocayne J.D."/>
            <person name="Scott J.D."/>
            <person name="Shirley R."/>
            <person name="Liu L.-I."/>
            <person name="Glodek A."/>
            <person name="Kelley J.M."/>
            <person name="Weidman J.F."/>
            <person name="Phillips C.A."/>
            <person name="Spriggs T."/>
            <person name="Hedblom E."/>
            <person name="Cotton M.D."/>
            <person name="Utterback T.R."/>
            <person name="Hanna M.C."/>
            <person name="Nguyen D.T."/>
            <person name="Saudek D.M."/>
            <person name="Brandon R.C."/>
            <person name="Fine L.D."/>
            <person name="Fritchman J.L."/>
            <person name="Fuhrmann J.L."/>
            <person name="Geoghagen N.S.M."/>
            <person name="Gnehm C.L."/>
            <person name="McDonald L.A."/>
            <person name="Small K.V."/>
            <person name="Fraser C.M."/>
            <person name="Smith H.O."/>
            <person name="Venter J.C."/>
        </authorList>
    </citation>
    <scope>NUCLEOTIDE SEQUENCE [LARGE SCALE GENOMIC DNA]</scope>
    <source>
        <strain>ATCC 51907 / DSM 11121 / KW20 / Rd</strain>
    </source>
</reference>
<sequence length="73" mass="7700">MEQLKTAANPNQAKIDNATKSYETAKNELVSTWKGTAGSVSVGNKIRGITHQITGVAAGTLSRTICCCSWSSL</sequence>
<keyword id="KW-1185">Reference proteome</keyword>
<proteinExistence type="predicted"/>
<accession>P44120</accession>
<organism>
    <name type="scientific">Haemophilus influenzae (strain ATCC 51907 / DSM 11121 / KW20 / Rd)</name>
    <dbReference type="NCBI Taxonomy" id="71421"/>
    <lineage>
        <taxon>Bacteria</taxon>
        <taxon>Pseudomonadati</taxon>
        <taxon>Pseudomonadota</taxon>
        <taxon>Gammaproteobacteria</taxon>
        <taxon>Pasteurellales</taxon>
        <taxon>Pasteurellaceae</taxon>
        <taxon>Haemophilus</taxon>
    </lineage>
</organism>
<name>Y1176_HAEIN</name>
<feature type="chain" id="PRO_0000078009" description="Uncharacterized protein HI_1176">
    <location>
        <begin position="1"/>
        <end position="73"/>
    </location>
</feature>
<protein>
    <recommendedName>
        <fullName>Uncharacterized protein HI_1176</fullName>
    </recommendedName>
</protein>